<dbReference type="EC" id="2.7.11.24"/>
<dbReference type="EMBL" id="BA000054">
    <property type="protein sequence ID" value="BAE63646.1"/>
    <property type="status" value="ALT_SEQ"/>
    <property type="molecule type" value="Genomic_DNA"/>
</dbReference>
<dbReference type="SMR" id="Q2U469"/>
<dbReference type="STRING" id="510516.Q2U469"/>
<dbReference type="Proteomes" id="UP000006564">
    <property type="component" value="Chromosome 6"/>
</dbReference>
<dbReference type="GO" id="GO:0005524">
    <property type="term" value="F:ATP binding"/>
    <property type="evidence" value="ECO:0007669"/>
    <property type="project" value="UniProtKB-KW"/>
</dbReference>
<dbReference type="GO" id="GO:0004707">
    <property type="term" value="F:MAP kinase activity"/>
    <property type="evidence" value="ECO:0007669"/>
    <property type="project" value="UniProtKB-EC"/>
</dbReference>
<dbReference type="GO" id="GO:0106310">
    <property type="term" value="F:protein serine kinase activity"/>
    <property type="evidence" value="ECO:0007669"/>
    <property type="project" value="RHEA"/>
</dbReference>
<dbReference type="FunFam" id="1.10.510.10:FF:000049">
    <property type="entry name" value="Mitogen-activated protein kinase"/>
    <property type="match status" value="1"/>
</dbReference>
<dbReference type="FunFam" id="3.30.200.20:FF:000046">
    <property type="entry name" value="Mitogen-activated protein kinase"/>
    <property type="match status" value="1"/>
</dbReference>
<dbReference type="Gene3D" id="3.30.200.20">
    <property type="entry name" value="Phosphorylase Kinase, domain 1"/>
    <property type="match status" value="1"/>
</dbReference>
<dbReference type="Gene3D" id="1.10.510.10">
    <property type="entry name" value="Transferase(Phosphotransferase) domain 1"/>
    <property type="match status" value="1"/>
</dbReference>
<dbReference type="InterPro" id="IPR011009">
    <property type="entry name" value="Kinase-like_dom_sf"/>
</dbReference>
<dbReference type="InterPro" id="IPR050117">
    <property type="entry name" value="MAP_kinase"/>
</dbReference>
<dbReference type="InterPro" id="IPR003527">
    <property type="entry name" value="MAP_kinase_CS"/>
</dbReference>
<dbReference type="InterPro" id="IPR000719">
    <property type="entry name" value="Prot_kinase_dom"/>
</dbReference>
<dbReference type="InterPro" id="IPR017441">
    <property type="entry name" value="Protein_kinase_ATP_BS"/>
</dbReference>
<dbReference type="InterPro" id="IPR008271">
    <property type="entry name" value="Ser/Thr_kinase_AS"/>
</dbReference>
<dbReference type="PANTHER" id="PTHR24055">
    <property type="entry name" value="MITOGEN-ACTIVATED PROTEIN KINASE"/>
    <property type="match status" value="1"/>
</dbReference>
<dbReference type="Pfam" id="PF00069">
    <property type="entry name" value="Pkinase"/>
    <property type="match status" value="1"/>
</dbReference>
<dbReference type="SMART" id="SM00220">
    <property type="entry name" value="S_TKc"/>
    <property type="match status" value="1"/>
</dbReference>
<dbReference type="SUPFAM" id="SSF56112">
    <property type="entry name" value="Protein kinase-like (PK-like)"/>
    <property type="match status" value="1"/>
</dbReference>
<dbReference type="PROSITE" id="PS01351">
    <property type="entry name" value="MAPK"/>
    <property type="match status" value="1"/>
</dbReference>
<dbReference type="PROSITE" id="PS00107">
    <property type="entry name" value="PROTEIN_KINASE_ATP"/>
    <property type="match status" value="1"/>
</dbReference>
<dbReference type="PROSITE" id="PS50011">
    <property type="entry name" value="PROTEIN_KINASE_DOM"/>
    <property type="match status" value="1"/>
</dbReference>
<dbReference type="PROSITE" id="PS00108">
    <property type="entry name" value="PROTEIN_KINASE_ST"/>
    <property type="match status" value="1"/>
</dbReference>
<sequence>MEFIRAEILGTTFETTSRYANVQPVGLGAFGLVCSAYDQITQQHVAVKKMMNPFANASIAKRTYREVKLLKQLRHENLIGLCDIFISPLEDIYLVTELLGTDLGRLLRARPLDNKFAQYFMYQILRGLKYIHSAGVIHRDLKPSNLLVNENCDLKICDFGLARVQEPQMTGYVSTRYYRAPEIMLTWQRYGKMVDIWSAGCILAEMLRGKPLFPGKDHIHQFFLITEVLGNPPPEVVQKITSGNTQRVVNSLPNQEPRPLRAVFHEFDNDVISLLEQLLLFDPDKRLTAETALQHPYLAPYHDPDDEPAALEKFDWSFNDADLPIDTWKLMMCVAIGSAKCAPN</sequence>
<organism>
    <name type="scientific">Aspergillus oryzae (strain ATCC 42149 / RIB 40)</name>
    <name type="common">Yellow koji mold</name>
    <dbReference type="NCBI Taxonomy" id="510516"/>
    <lineage>
        <taxon>Eukaryota</taxon>
        <taxon>Fungi</taxon>
        <taxon>Dikarya</taxon>
        <taxon>Ascomycota</taxon>
        <taxon>Pezizomycotina</taxon>
        <taxon>Eurotiomycetes</taxon>
        <taxon>Eurotiomycetidae</taxon>
        <taxon>Eurotiales</taxon>
        <taxon>Aspergillaceae</taxon>
        <taxon>Aspergillus</taxon>
        <taxon>Aspergillus subgen. Circumdati</taxon>
    </lineage>
</organism>
<feature type="chain" id="PRO_0000289715" description="Mitogen-activated protein kinase mpkC">
    <location>
        <begin position="1"/>
        <end position="344"/>
    </location>
</feature>
<feature type="domain" description="Protein kinase" evidence="2">
    <location>
        <begin position="19"/>
        <end position="298"/>
    </location>
</feature>
<feature type="short sequence motif" description="TXY">
    <location>
        <begin position="170"/>
        <end position="172"/>
    </location>
</feature>
<feature type="active site" description="Proton acceptor" evidence="2 3">
    <location>
        <position position="140"/>
    </location>
</feature>
<feature type="binding site" evidence="2">
    <location>
        <begin position="25"/>
        <end position="33"/>
    </location>
    <ligand>
        <name>ATP</name>
        <dbReference type="ChEBI" id="CHEBI:30616"/>
    </ligand>
</feature>
<feature type="binding site" evidence="2">
    <location>
        <position position="48"/>
    </location>
    <ligand>
        <name>ATP</name>
        <dbReference type="ChEBI" id="CHEBI:30616"/>
    </ligand>
</feature>
<feature type="modified residue" description="Phosphothreonine" evidence="1">
    <location>
        <position position="170"/>
    </location>
</feature>
<feature type="modified residue" description="Phosphotyrosine" evidence="1">
    <location>
        <position position="172"/>
    </location>
</feature>
<name>MPKC_ASPOR</name>
<reference key="1">
    <citation type="journal article" date="2005" name="Nature">
        <title>Genome sequencing and analysis of Aspergillus oryzae.</title>
        <authorList>
            <person name="Machida M."/>
            <person name="Asai K."/>
            <person name="Sano M."/>
            <person name="Tanaka T."/>
            <person name="Kumagai T."/>
            <person name="Terai G."/>
            <person name="Kusumoto K."/>
            <person name="Arima T."/>
            <person name="Akita O."/>
            <person name="Kashiwagi Y."/>
            <person name="Abe K."/>
            <person name="Gomi K."/>
            <person name="Horiuchi H."/>
            <person name="Kitamoto K."/>
            <person name="Kobayashi T."/>
            <person name="Takeuchi M."/>
            <person name="Denning D.W."/>
            <person name="Galagan J.E."/>
            <person name="Nierman W.C."/>
            <person name="Yu J."/>
            <person name="Archer D.B."/>
            <person name="Bennett J.W."/>
            <person name="Bhatnagar D."/>
            <person name="Cleveland T.E."/>
            <person name="Fedorova N.D."/>
            <person name="Gotoh O."/>
            <person name="Horikawa H."/>
            <person name="Hosoyama A."/>
            <person name="Ichinomiya M."/>
            <person name="Igarashi R."/>
            <person name="Iwashita K."/>
            <person name="Juvvadi P.R."/>
            <person name="Kato M."/>
            <person name="Kato Y."/>
            <person name="Kin T."/>
            <person name="Kokubun A."/>
            <person name="Maeda H."/>
            <person name="Maeyama N."/>
            <person name="Maruyama J."/>
            <person name="Nagasaki H."/>
            <person name="Nakajima T."/>
            <person name="Oda K."/>
            <person name="Okada K."/>
            <person name="Paulsen I."/>
            <person name="Sakamoto K."/>
            <person name="Sawano T."/>
            <person name="Takahashi M."/>
            <person name="Takase K."/>
            <person name="Terabayashi Y."/>
            <person name="Wortman J.R."/>
            <person name="Yamada O."/>
            <person name="Yamagata Y."/>
            <person name="Anazawa H."/>
            <person name="Hata Y."/>
            <person name="Koide Y."/>
            <person name="Komori T."/>
            <person name="Koyama Y."/>
            <person name="Minetoki T."/>
            <person name="Suharnan S."/>
            <person name="Tanaka A."/>
            <person name="Isono K."/>
            <person name="Kuhara S."/>
            <person name="Ogasawara N."/>
            <person name="Kikuchi H."/>
        </authorList>
    </citation>
    <scope>NUCLEOTIDE SEQUENCE [LARGE SCALE GENOMIC DNA]</scope>
    <source>
        <strain>ATCC 42149 / RIB 40</strain>
    </source>
</reference>
<gene>
    <name type="primary">mpkC</name>
    <name type="ORF">AO090020000466</name>
</gene>
<keyword id="KW-0067">ATP-binding</keyword>
<keyword id="KW-0418">Kinase</keyword>
<keyword id="KW-0547">Nucleotide-binding</keyword>
<keyword id="KW-0597">Phosphoprotein</keyword>
<keyword id="KW-1185">Reference proteome</keyword>
<keyword id="KW-0723">Serine/threonine-protein kinase</keyword>
<keyword id="KW-0808">Transferase</keyword>
<accession>Q2U469</accession>
<comment type="function">
    <text evidence="1">Mitogen-activated protein kinase required for growth on media where sorbitol or mannitol is the sole carbon source.</text>
</comment>
<comment type="catalytic activity">
    <reaction>
        <text>L-seryl-[protein] + ATP = O-phospho-L-seryl-[protein] + ADP + H(+)</text>
        <dbReference type="Rhea" id="RHEA:17989"/>
        <dbReference type="Rhea" id="RHEA-COMP:9863"/>
        <dbReference type="Rhea" id="RHEA-COMP:11604"/>
        <dbReference type="ChEBI" id="CHEBI:15378"/>
        <dbReference type="ChEBI" id="CHEBI:29999"/>
        <dbReference type="ChEBI" id="CHEBI:30616"/>
        <dbReference type="ChEBI" id="CHEBI:83421"/>
        <dbReference type="ChEBI" id="CHEBI:456216"/>
        <dbReference type="EC" id="2.7.11.24"/>
    </reaction>
</comment>
<comment type="catalytic activity">
    <reaction>
        <text>L-threonyl-[protein] + ATP = O-phospho-L-threonyl-[protein] + ADP + H(+)</text>
        <dbReference type="Rhea" id="RHEA:46608"/>
        <dbReference type="Rhea" id="RHEA-COMP:11060"/>
        <dbReference type="Rhea" id="RHEA-COMP:11605"/>
        <dbReference type="ChEBI" id="CHEBI:15378"/>
        <dbReference type="ChEBI" id="CHEBI:30013"/>
        <dbReference type="ChEBI" id="CHEBI:30616"/>
        <dbReference type="ChEBI" id="CHEBI:61977"/>
        <dbReference type="ChEBI" id="CHEBI:456216"/>
        <dbReference type="EC" id="2.7.11.24"/>
    </reaction>
</comment>
<comment type="cofactor">
    <cofactor evidence="1">
        <name>Mg(2+)</name>
        <dbReference type="ChEBI" id="CHEBI:18420"/>
    </cofactor>
</comment>
<comment type="activity regulation">
    <text evidence="1">Activated by tyrosine and threonine phosphorylation.</text>
</comment>
<comment type="domain">
    <text>The TXY motif contains the threonine and tyrosine residues whose phosphorylation activates the MAP kinases.</text>
</comment>
<comment type="PTM">
    <text evidence="1">Dually phosphorylated on Thr-170 and Tyr-172, which activates the enzyme.</text>
</comment>
<comment type="similarity">
    <text evidence="2">Belongs to the protein kinase superfamily. Ser/Thr protein kinase family. MAP kinase subfamily. HOG1 sub-subfamily.</text>
</comment>
<comment type="sequence caution" evidence="4">
    <conflict type="erroneous gene model prediction">
        <sequence resource="EMBL-CDS" id="BAE63646"/>
    </conflict>
</comment>
<proteinExistence type="inferred from homology"/>
<evidence type="ECO:0000250" key="1"/>
<evidence type="ECO:0000255" key="2">
    <source>
        <dbReference type="PROSITE-ProRule" id="PRU00159"/>
    </source>
</evidence>
<evidence type="ECO:0000255" key="3">
    <source>
        <dbReference type="PROSITE-ProRule" id="PRU10027"/>
    </source>
</evidence>
<evidence type="ECO:0000305" key="4"/>
<protein>
    <recommendedName>
        <fullName>Mitogen-activated protein kinase mpkC</fullName>
        <shortName>MAP kinase C</shortName>
        <ecNumber>2.7.11.24</ecNumber>
    </recommendedName>
</protein>